<organism>
    <name type="scientific">Mus musculus</name>
    <name type="common">Mouse</name>
    <dbReference type="NCBI Taxonomy" id="10090"/>
    <lineage>
        <taxon>Eukaryota</taxon>
        <taxon>Metazoa</taxon>
        <taxon>Chordata</taxon>
        <taxon>Craniata</taxon>
        <taxon>Vertebrata</taxon>
        <taxon>Euteleostomi</taxon>
        <taxon>Mammalia</taxon>
        <taxon>Eutheria</taxon>
        <taxon>Euarchontoglires</taxon>
        <taxon>Glires</taxon>
        <taxon>Rodentia</taxon>
        <taxon>Myomorpha</taxon>
        <taxon>Muroidea</taxon>
        <taxon>Muridae</taxon>
        <taxon>Murinae</taxon>
        <taxon>Mus</taxon>
        <taxon>Mus</taxon>
    </lineage>
</organism>
<feature type="chain" id="PRO_0000144717" description="DNA fragmentation factor subunit alpha">
    <location>
        <begin position="1"/>
        <end position="331"/>
    </location>
</feature>
<feature type="domain" description="CIDE-N" evidence="3">
    <location>
        <begin position="17"/>
        <end position="96"/>
    </location>
</feature>
<feature type="region of interest" description="Disordered" evidence="4">
    <location>
        <begin position="306"/>
        <end position="331"/>
    </location>
</feature>
<feature type="site" description="Cleavage; by caspase-3" evidence="1">
    <location>
        <begin position="117"/>
        <end position="118"/>
    </location>
</feature>
<feature type="site" description="Cleavage; by caspase-3" evidence="1">
    <location>
        <begin position="224"/>
        <end position="225"/>
    </location>
</feature>
<feature type="modified residue" description="N-acetylmethionine" evidence="2">
    <location>
        <position position="1"/>
    </location>
</feature>
<feature type="modified residue" description="Phosphothreonine" evidence="2">
    <location>
        <position position="243"/>
    </location>
</feature>
<feature type="splice variant" id="VSP_001087" description="In isoform ICAD-S." evidence="5">
    <original>SVSK</original>
    <variation>VGKN</variation>
    <location>
        <begin position="262"/>
        <end position="265"/>
    </location>
</feature>
<feature type="splice variant" id="VSP_001088" description="In isoform ICAD-S." evidence="5">
    <location>
        <begin position="266"/>
        <end position="331"/>
    </location>
</feature>
<feature type="sequence conflict" description="In Ref. 1; BAA24140, 2; BAA24141 and 4; CAQ52098." evidence="5" ref="1 2 4">
    <original>I</original>
    <variation>T</variation>
    <location>
        <position position="95"/>
    </location>
</feature>
<feature type="strand" evidence="6">
    <location>
        <begin position="6"/>
        <end position="11"/>
    </location>
</feature>
<feature type="strand" evidence="6">
    <location>
        <begin position="19"/>
        <end position="25"/>
    </location>
</feature>
<feature type="strand" evidence="6">
    <location>
        <begin position="28"/>
        <end position="38"/>
    </location>
</feature>
<feature type="helix" evidence="6">
    <location>
        <begin position="39"/>
        <end position="50"/>
    </location>
</feature>
<feature type="helix" evidence="6">
    <location>
        <begin position="54"/>
        <end position="56"/>
    </location>
</feature>
<feature type="strand" evidence="6">
    <location>
        <begin position="60"/>
        <end position="66"/>
    </location>
</feature>
<feature type="strand" evidence="6">
    <location>
        <begin position="72"/>
        <end position="79"/>
    </location>
</feature>
<feature type="strand" evidence="6">
    <location>
        <begin position="84"/>
        <end position="88"/>
    </location>
</feature>
<feature type="strand" evidence="6">
    <location>
        <begin position="90"/>
        <end position="92"/>
    </location>
</feature>
<gene>
    <name type="primary">Dffa</name>
    <name type="synonym">Icad</name>
</gene>
<dbReference type="EMBL" id="AB009375">
    <property type="protein sequence ID" value="BAA24140.1"/>
    <property type="molecule type" value="mRNA"/>
</dbReference>
<dbReference type="EMBL" id="AB009376">
    <property type="protein sequence ID" value="BAA24141.1"/>
    <property type="molecule type" value="mRNA"/>
</dbReference>
<dbReference type="EMBL" id="AK051011">
    <property type="protein sequence ID" value="BAC34496.1"/>
    <property type="molecule type" value="mRNA"/>
</dbReference>
<dbReference type="EMBL" id="AL611967">
    <property type="protein sequence ID" value="CAM13988.1"/>
    <property type="molecule type" value="Genomic_DNA"/>
</dbReference>
<dbReference type="EMBL" id="CU210839">
    <property type="protein sequence ID" value="CAQ52098.1"/>
    <property type="molecule type" value="Genomic_DNA"/>
</dbReference>
<dbReference type="CCDS" id="CCDS18951.1">
    <molecule id="O54786-1"/>
</dbReference>
<dbReference type="CCDS" id="CCDS18952.1">
    <molecule id="O54786-2"/>
</dbReference>
<dbReference type="RefSeq" id="NP_001020467.1">
    <molecule id="O54786-1"/>
    <property type="nucleotide sequence ID" value="NM_001025296.2"/>
</dbReference>
<dbReference type="RefSeq" id="NP_034174.2">
    <molecule id="O54786-2"/>
    <property type="nucleotide sequence ID" value="NM_010044.3"/>
</dbReference>
<dbReference type="PDB" id="1F2R">
    <property type="method" value="NMR"/>
    <property type="chains" value="I=1-100"/>
</dbReference>
<dbReference type="PDBsum" id="1F2R"/>
<dbReference type="SMR" id="O54786"/>
<dbReference type="BioGRID" id="199211">
    <property type="interactions" value="17"/>
</dbReference>
<dbReference type="FunCoup" id="O54786">
    <property type="interactions" value="3021"/>
</dbReference>
<dbReference type="IntAct" id="O54786">
    <property type="interactions" value="4"/>
</dbReference>
<dbReference type="MINT" id="O54786"/>
<dbReference type="STRING" id="10090.ENSMUSP00000030816"/>
<dbReference type="GlyGen" id="O54786">
    <property type="glycosylation" value="1 site, 1 O-linked glycan (1 site)"/>
</dbReference>
<dbReference type="iPTMnet" id="O54786"/>
<dbReference type="PhosphoSitePlus" id="O54786"/>
<dbReference type="jPOST" id="O54786"/>
<dbReference type="PaxDb" id="10090-ENSMUSP00000030816"/>
<dbReference type="PeptideAtlas" id="O54786"/>
<dbReference type="ProteomicsDB" id="279409">
    <molecule id="O54786-1"/>
</dbReference>
<dbReference type="ProteomicsDB" id="279410">
    <molecule id="O54786-2"/>
</dbReference>
<dbReference type="Pumba" id="O54786"/>
<dbReference type="Antibodypedia" id="3633">
    <property type="antibodies" value="856 antibodies from 46 providers"/>
</dbReference>
<dbReference type="DNASU" id="13347"/>
<dbReference type="Ensembl" id="ENSMUST00000030816.4">
    <molecule id="O54786-1"/>
    <property type="protein sequence ID" value="ENSMUSP00000030816.4"/>
    <property type="gene ID" value="ENSMUSG00000028974.14"/>
</dbReference>
<dbReference type="Ensembl" id="ENSMUST00000103216.10">
    <molecule id="O54786-2"/>
    <property type="protein sequence ID" value="ENSMUSP00000099505.4"/>
    <property type="gene ID" value="ENSMUSG00000028974.14"/>
</dbReference>
<dbReference type="GeneID" id="13347"/>
<dbReference type="KEGG" id="mmu:13347"/>
<dbReference type="UCSC" id="uc008vvr.2">
    <molecule id="O54786-1"/>
    <property type="organism name" value="mouse"/>
</dbReference>
<dbReference type="AGR" id="MGI:1196227"/>
<dbReference type="CTD" id="1676"/>
<dbReference type="MGI" id="MGI:1196227">
    <property type="gene designation" value="Dffa"/>
</dbReference>
<dbReference type="VEuPathDB" id="HostDB:ENSMUSG00000028974"/>
<dbReference type="eggNOG" id="ENOG502RQ19">
    <property type="taxonomic scope" value="Eukaryota"/>
</dbReference>
<dbReference type="GeneTree" id="ENSGT00390000018596"/>
<dbReference type="HOGENOM" id="CLU_086234_0_0_1"/>
<dbReference type="InParanoid" id="O54786"/>
<dbReference type="OMA" id="NWDIRKT"/>
<dbReference type="OrthoDB" id="6475906at2759"/>
<dbReference type="PhylomeDB" id="O54786"/>
<dbReference type="TreeFam" id="TF102021"/>
<dbReference type="Reactome" id="R-MMU-140342">
    <property type="pathway name" value="Apoptosis induced DNA fragmentation"/>
</dbReference>
<dbReference type="BioGRID-ORCS" id="13347">
    <property type="hits" value="3 hits in 78 CRISPR screens"/>
</dbReference>
<dbReference type="ChiTaRS" id="Dffa">
    <property type="organism name" value="mouse"/>
</dbReference>
<dbReference type="EvolutionaryTrace" id="O54786"/>
<dbReference type="PRO" id="PR:O54786"/>
<dbReference type="Proteomes" id="UP000000589">
    <property type="component" value="Chromosome 4"/>
</dbReference>
<dbReference type="RNAct" id="O54786">
    <property type="molecule type" value="protein"/>
</dbReference>
<dbReference type="Bgee" id="ENSMUSG00000028974">
    <property type="expression patterns" value="Expressed in soleus muscle and 116 other cell types or tissues"/>
</dbReference>
<dbReference type="ExpressionAtlas" id="O54786">
    <property type="expression patterns" value="baseline and differential"/>
</dbReference>
<dbReference type="GO" id="GO:0000785">
    <property type="term" value="C:chromatin"/>
    <property type="evidence" value="ECO:0007669"/>
    <property type="project" value="Ensembl"/>
</dbReference>
<dbReference type="GO" id="GO:0005829">
    <property type="term" value="C:cytosol"/>
    <property type="evidence" value="ECO:0007669"/>
    <property type="project" value="Ensembl"/>
</dbReference>
<dbReference type="GO" id="GO:0005634">
    <property type="term" value="C:nucleus"/>
    <property type="evidence" value="ECO:0000266"/>
    <property type="project" value="MGI"/>
</dbReference>
<dbReference type="GO" id="GO:0005886">
    <property type="term" value="C:plasma membrane"/>
    <property type="evidence" value="ECO:0007669"/>
    <property type="project" value="Ensembl"/>
</dbReference>
<dbReference type="GO" id="GO:0032991">
    <property type="term" value="C:protein-containing complex"/>
    <property type="evidence" value="ECO:0007669"/>
    <property type="project" value="Ensembl"/>
</dbReference>
<dbReference type="GO" id="GO:0060703">
    <property type="term" value="F:deoxyribonuclease inhibitor activity"/>
    <property type="evidence" value="ECO:0007669"/>
    <property type="project" value="Ensembl"/>
</dbReference>
<dbReference type="GO" id="GO:0019904">
    <property type="term" value="F:protein domain specific binding"/>
    <property type="evidence" value="ECO:0007669"/>
    <property type="project" value="Ensembl"/>
</dbReference>
<dbReference type="GO" id="GO:0044183">
    <property type="term" value="F:protein folding chaperone"/>
    <property type="evidence" value="ECO:0007669"/>
    <property type="project" value="Ensembl"/>
</dbReference>
<dbReference type="GO" id="GO:0006309">
    <property type="term" value="P:apoptotic DNA fragmentation"/>
    <property type="evidence" value="ECO:0007669"/>
    <property type="project" value="InterPro"/>
</dbReference>
<dbReference type="GO" id="GO:0061077">
    <property type="term" value="P:chaperone-mediated protein folding"/>
    <property type="evidence" value="ECO:0007669"/>
    <property type="project" value="Ensembl"/>
</dbReference>
<dbReference type="GO" id="GO:1902511">
    <property type="term" value="P:negative regulation of apoptotic DNA fragmentation"/>
    <property type="evidence" value="ECO:0000315"/>
    <property type="project" value="MGI"/>
</dbReference>
<dbReference type="GO" id="GO:1900118">
    <property type="term" value="P:negative regulation of execution phase of apoptosis"/>
    <property type="evidence" value="ECO:0007669"/>
    <property type="project" value="Ensembl"/>
</dbReference>
<dbReference type="GO" id="GO:0043065">
    <property type="term" value="P:positive regulation of apoptotic process"/>
    <property type="evidence" value="ECO:0000315"/>
    <property type="project" value="MGI"/>
</dbReference>
<dbReference type="GO" id="GO:0070242">
    <property type="term" value="P:thymocyte apoptotic process"/>
    <property type="evidence" value="ECO:0000315"/>
    <property type="project" value="MGI"/>
</dbReference>
<dbReference type="CDD" id="cd06536">
    <property type="entry name" value="CIDE_N_ICAD"/>
    <property type="match status" value="1"/>
</dbReference>
<dbReference type="FunFam" id="1.10.1490.10:FF:000001">
    <property type="entry name" value="DNA fragmentation factor subunit alpha"/>
    <property type="match status" value="1"/>
</dbReference>
<dbReference type="FunFam" id="1.10.1490.10:FF:000002">
    <property type="entry name" value="DNA fragmentation factor subunit alpha"/>
    <property type="match status" value="1"/>
</dbReference>
<dbReference type="FunFam" id="3.10.20.10:FF:000007">
    <property type="entry name" value="DNA fragmentation factor subunit alpha"/>
    <property type="match status" value="1"/>
</dbReference>
<dbReference type="Gene3D" id="3.10.20.10">
    <property type="match status" value="1"/>
</dbReference>
<dbReference type="Gene3D" id="1.10.1490.10">
    <property type="entry name" value="C-terminal domain of DFF45/ICAD (DFF-C domain)"/>
    <property type="match status" value="2"/>
</dbReference>
<dbReference type="InterPro" id="IPR003508">
    <property type="entry name" value="CIDE-N_dom"/>
</dbReference>
<dbReference type="InterPro" id="IPR027296">
    <property type="entry name" value="DFF-C"/>
</dbReference>
<dbReference type="InterPro" id="IPR017299">
    <property type="entry name" value="DFF45"/>
</dbReference>
<dbReference type="InterPro" id="IPR015121">
    <property type="entry name" value="DNA_fragmentation_mid_dom"/>
</dbReference>
<dbReference type="PANTHER" id="PTHR12306">
    <property type="entry name" value="CELL DEATH ACTIVATOR CIDE"/>
    <property type="match status" value="1"/>
</dbReference>
<dbReference type="PANTHER" id="PTHR12306:SF16">
    <property type="entry name" value="DNAATION FACTOR SUBUNIT ALPHA"/>
    <property type="match status" value="1"/>
</dbReference>
<dbReference type="Pfam" id="PF02017">
    <property type="entry name" value="CIDE-N"/>
    <property type="match status" value="1"/>
</dbReference>
<dbReference type="Pfam" id="PF09033">
    <property type="entry name" value="DFF-C"/>
    <property type="match status" value="1"/>
</dbReference>
<dbReference type="PIRSF" id="PIRSF037865">
    <property type="entry name" value="DFF_alpha"/>
    <property type="match status" value="1"/>
</dbReference>
<dbReference type="SMART" id="SM00266">
    <property type="entry name" value="CAD"/>
    <property type="match status" value="1"/>
</dbReference>
<dbReference type="SUPFAM" id="SSF81783">
    <property type="entry name" value="C-terminal domain of DFF45/ICAD (DFF-C domain)"/>
    <property type="match status" value="1"/>
</dbReference>
<dbReference type="SUPFAM" id="SSF54277">
    <property type="entry name" value="CAD &amp; PB1 domains"/>
    <property type="match status" value="1"/>
</dbReference>
<dbReference type="PROSITE" id="PS51135">
    <property type="entry name" value="CIDE_N"/>
    <property type="match status" value="1"/>
</dbReference>
<proteinExistence type="evidence at protein level"/>
<name>DFFA_MOUSE</name>
<keyword id="KW-0002">3D-structure</keyword>
<keyword id="KW-0007">Acetylation</keyword>
<keyword id="KW-0025">Alternative splicing</keyword>
<keyword id="KW-0053">Apoptosis</keyword>
<keyword id="KW-0963">Cytoplasm</keyword>
<keyword id="KW-0597">Phosphoprotein</keyword>
<keyword id="KW-1185">Reference proteome</keyword>
<comment type="function">
    <text>Inhibitor of the caspase-activated DNase (DFF40).</text>
</comment>
<comment type="subunit">
    <text evidence="2">Heterodimer of DFFA and DFFB.</text>
</comment>
<comment type="interaction">
    <interactant intactId="EBI-1634519">
        <id>O54786</id>
    </interactant>
    <interactant intactId="EBI-7365197">
        <id>O54788</id>
        <label>Dffb</label>
    </interactant>
    <organismsDiffer>false</organismsDiffer>
    <experiments>7</experiments>
</comment>
<comment type="subcellular location">
    <subcellularLocation>
        <location evidence="1">Cytoplasm</location>
    </subcellularLocation>
</comment>
<comment type="alternative products">
    <event type="alternative splicing"/>
    <isoform>
        <id>O54786-1</id>
        <name>ICAD-L</name>
        <sequence type="displayed"/>
    </isoform>
    <isoform>
        <id>O54786-2</id>
        <name>ICAD-S</name>
        <sequence type="described" ref="VSP_001087 VSP_001088"/>
    </isoform>
</comment>
<comment type="PTM">
    <text evidence="1">Caspase-3 cleaves DFF45 at 2 sites to generate an active factor.</text>
</comment>
<accession>O54786</accession>
<accession>B2KFX0</accession>
<accession>O54787</accession>
<accession>Q8BQC7</accession>
<protein>
    <recommendedName>
        <fullName>DNA fragmentation factor subunit alpha</fullName>
    </recommendedName>
    <alternativeName>
        <fullName>DNA fragmentation factor 45 kDa subunit</fullName>
        <shortName>DFF-45</shortName>
    </alternativeName>
    <alternativeName>
        <fullName>Inhibitor of CAD</fullName>
        <shortName>ICAD</shortName>
    </alternativeName>
</protein>
<evidence type="ECO:0000250" key="1"/>
<evidence type="ECO:0000250" key="2">
    <source>
        <dbReference type="UniProtKB" id="O00273"/>
    </source>
</evidence>
<evidence type="ECO:0000255" key="3">
    <source>
        <dbReference type="PROSITE-ProRule" id="PRU00447"/>
    </source>
</evidence>
<evidence type="ECO:0000256" key="4">
    <source>
        <dbReference type="SAM" id="MobiDB-lite"/>
    </source>
</evidence>
<evidence type="ECO:0000305" key="5"/>
<evidence type="ECO:0007829" key="6">
    <source>
        <dbReference type="PDB" id="1F2R"/>
    </source>
</evidence>
<sequence length="331" mass="36572">MELSRGASAPDPDDVRPLKPCLLRRNHSRDQHGVAASSLEELRSKACELLAIDKSLTPITLVLAEDGTIVDDDDYFLCLPSNTKFVALACNEKWIYNDSDGGTAWVSQESFEADEPDSRAGVKWKNVARQLKEDLSSIILLSEEDLQALIDIPCAELAQELCQSCATVQGLQSTLQQVLDQREEARQSKQLLELYLQALEKEGNILSNQKESKAALSEELDAVDTGVGREMASEVLLRSQILTTLKEKPAPELSLSSQDLESVSKEDPKALAVALSWDIRKAETVQQACTTELALRLQQVQSLHSLRNLSARRSPLPGEPQRPKRAKRDSS</sequence>
<reference key="1">
    <citation type="journal article" date="1998" name="Nature">
        <title>A caspase-activated DNase that degrades DNA during apoptosis, and its inhibitor ICAD.</title>
        <authorList>
            <person name="Enari M."/>
            <person name="Sakahira H."/>
            <person name="Yokoyama H."/>
            <person name="Okawa K."/>
            <person name="Iwamatsu A."/>
            <person name="Nagata S."/>
        </authorList>
    </citation>
    <scope>NUCLEOTIDE SEQUENCE [MRNA]</scope>
</reference>
<reference key="2">
    <citation type="journal article" date="1998" name="Nature">
        <title>Cleavage of CAD inhibitor in CAD activation and DNA degradation during apoptosis.</title>
        <authorList>
            <person name="Sakahira H."/>
            <person name="Enari M."/>
            <person name="Nagata S."/>
        </authorList>
    </citation>
    <scope>NUCLEOTIDE SEQUENCE [MRNA]</scope>
</reference>
<reference key="3">
    <citation type="journal article" date="2005" name="Science">
        <title>The transcriptional landscape of the mammalian genome.</title>
        <authorList>
            <person name="Carninci P."/>
            <person name="Kasukawa T."/>
            <person name="Katayama S."/>
            <person name="Gough J."/>
            <person name="Frith M.C."/>
            <person name="Maeda N."/>
            <person name="Oyama R."/>
            <person name="Ravasi T."/>
            <person name="Lenhard B."/>
            <person name="Wells C."/>
            <person name="Kodzius R."/>
            <person name="Shimokawa K."/>
            <person name="Bajic V.B."/>
            <person name="Brenner S.E."/>
            <person name="Batalov S."/>
            <person name="Forrest A.R."/>
            <person name="Zavolan M."/>
            <person name="Davis M.J."/>
            <person name="Wilming L.G."/>
            <person name="Aidinis V."/>
            <person name="Allen J.E."/>
            <person name="Ambesi-Impiombato A."/>
            <person name="Apweiler R."/>
            <person name="Aturaliya R.N."/>
            <person name="Bailey T.L."/>
            <person name="Bansal M."/>
            <person name="Baxter L."/>
            <person name="Beisel K.W."/>
            <person name="Bersano T."/>
            <person name="Bono H."/>
            <person name="Chalk A.M."/>
            <person name="Chiu K.P."/>
            <person name="Choudhary V."/>
            <person name="Christoffels A."/>
            <person name="Clutterbuck D.R."/>
            <person name="Crowe M.L."/>
            <person name="Dalla E."/>
            <person name="Dalrymple B.P."/>
            <person name="de Bono B."/>
            <person name="Della Gatta G."/>
            <person name="di Bernardo D."/>
            <person name="Down T."/>
            <person name="Engstrom P."/>
            <person name="Fagiolini M."/>
            <person name="Faulkner G."/>
            <person name="Fletcher C.F."/>
            <person name="Fukushima T."/>
            <person name="Furuno M."/>
            <person name="Futaki S."/>
            <person name="Gariboldi M."/>
            <person name="Georgii-Hemming P."/>
            <person name="Gingeras T.R."/>
            <person name="Gojobori T."/>
            <person name="Green R.E."/>
            <person name="Gustincich S."/>
            <person name="Harbers M."/>
            <person name="Hayashi Y."/>
            <person name="Hensch T.K."/>
            <person name="Hirokawa N."/>
            <person name="Hill D."/>
            <person name="Huminiecki L."/>
            <person name="Iacono M."/>
            <person name="Ikeo K."/>
            <person name="Iwama A."/>
            <person name="Ishikawa T."/>
            <person name="Jakt M."/>
            <person name="Kanapin A."/>
            <person name="Katoh M."/>
            <person name="Kawasawa Y."/>
            <person name="Kelso J."/>
            <person name="Kitamura H."/>
            <person name="Kitano H."/>
            <person name="Kollias G."/>
            <person name="Krishnan S.P."/>
            <person name="Kruger A."/>
            <person name="Kummerfeld S.K."/>
            <person name="Kurochkin I.V."/>
            <person name="Lareau L.F."/>
            <person name="Lazarevic D."/>
            <person name="Lipovich L."/>
            <person name="Liu J."/>
            <person name="Liuni S."/>
            <person name="McWilliam S."/>
            <person name="Madan Babu M."/>
            <person name="Madera M."/>
            <person name="Marchionni L."/>
            <person name="Matsuda H."/>
            <person name="Matsuzawa S."/>
            <person name="Miki H."/>
            <person name="Mignone F."/>
            <person name="Miyake S."/>
            <person name="Morris K."/>
            <person name="Mottagui-Tabar S."/>
            <person name="Mulder N."/>
            <person name="Nakano N."/>
            <person name="Nakauchi H."/>
            <person name="Ng P."/>
            <person name="Nilsson R."/>
            <person name="Nishiguchi S."/>
            <person name="Nishikawa S."/>
            <person name="Nori F."/>
            <person name="Ohara O."/>
            <person name="Okazaki Y."/>
            <person name="Orlando V."/>
            <person name="Pang K.C."/>
            <person name="Pavan W.J."/>
            <person name="Pavesi G."/>
            <person name="Pesole G."/>
            <person name="Petrovsky N."/>
            <person name="Piazza S."/>
            <person name="Reed J."/>
            <person name="Reid J.F."/>
            <person name="Ring B.Z."/>
            <person name="Ringwald M."/>
            <person name="Rost B."/>
            <person name="Ruan Y."/>
            <person name="Salzberg S.L."/>
            <person name="Sandelin A."/>
            <person name="Schneider C."/>
            <person name="Schoenbach C."/>
            <person name="Sekiguchi K."/>
            <person name="Semple C.A."/>
            <person name="Seno S."/>
            <person name="Sessa L."/>
            <person name="Sheng Y."/>
            <person name="Shibata Y."/>
            <person name="Shimada H."/>
            <person name="Shimada K."/>
            <person name="Silva D."/>
            <person name="Sinclair B."/>
            <person name="Sperling S."/>
            <person name="Stupka E."/>
            <person name="Sugiura K."/>
            <person name="Sultana R."/>
            <person name="Takenaka Y."/>
            <person name="Taki K."/>
            <person name="Tammoja K."/>
            <person name="Tan S.L."/>
            <person name="Tang S."/>
            <person name="Taylor M.S."/>
            <person name="Tegner J."/>
            <person name="Teichmann S.A."/>
            <person name="Ueda H.R."/>
            <person name="van Nimwegen E."/>
            <person name="Verardo R."/>
            <person name="Wei C.L."/>
            <person name="Yagi K."/>
            <person name="Yamanishi H."/>
            <person name="Zabarovsky E."/>
            <person name="Zhu S."/>
            <person name="Zimmer A."/>
            <person name="Hide W."/>
            <person name="Bult C."/>
            <person name="Grimmond S.M."/>
            <person name="Teasdale R.D."/>
            <person name="Liu E.T."/>
            <person name="Brusic V."/>
            <person name="Quackenbush J."/>
            <person name="Wahlestedt C."/>
            <person name="Mattick J.S."/>
            <person name="Hume D.A."/>
            <person name="Kai C."/>
            <person name="Sasaki D."/>
            <person name="Tomaru Y."/>
            <person name="Fukuda S."/>
            <person name="Kanamori-Katayama M."/>
            <person name="Suzuki M."/>
            <person name="Aoki J."/>
            <person name="Arakawa T."/>
            <person name="Iida J."/>
            <person name="Imamura K."/>
            <person name="Itoh M."/>
            <person name="Kato T."/>
            <person name="Kawaji H."/>
            <person name="Kawagashira N."/>
            <person name="Kawashima T."/>
            <person name="Kojima M."/>
            <person name="Kondo S."/>
            <person name="Konno H."/>
            <person name="Nakano K."/>
            <person name="Ninomiya N."/>
            <person name="Nishio T."/>
            <person name="Okada M."/>
            <person name="Plessy C."/>
            <person name="Shibata K."/>
            <person name="Shiraki T."/>
            <person name="Suzuki S."/>
            <person name="Tagami M."/>
            <person name="Waki K."/>
            <person name="Watahiki A."/>
            <person name="Okamura-Oho Y."/>
            <person name="Suzuki H."/>
            <person name="Kawai J."/>
            <person name="Hayashizaki Y."/>
        </authorList>
    </citation>
    <scope>NUCLEOTIDE SEQUENCE [LARGE SCALE MRNA]</scope>
    <source>
        <strain>C57BL/6J</strain>
    </source>
</reference>
<reference key="4">
    <citation type="journal article" date="2009" name="PLoS Biol.">
        <title>Lineage-specific biology revealed by a finished genome assembly of the mouse.</title>
        <authorList>
            <person name="Church D.M."/>
            <person name="Goodstadt L."/>
            <person name="Hillier L.W."/>
            <person name="Zody M.C."/>
            <person name="Goldstein S."/>
            <person name="She X."/>
            <person name="Bult C.J."/>
            <person name="Agarwala R."/>
            <person name="Cherry J.L."/>
            <person name="DiCuccio M."/>
            <person name="Hlavina W."/>
            <person name="Kapustin Y."/>
            <person name="Meric P."/>
            <person name="Maglott D."/>
            <person name="Birtle Z."/>
            <person name="Marques A.C."/>
            <person name="Graves T."/>
            <person name="Zhou S."/>
            <person name="Teague B."/>
            <person name="Potamousis K."/>
            <person name="Churas C."/>
            <person name="Place M."/>
            <person name="Herschleb J."/>
            <person name="Runnheim R."/>
            <person name="Forrest D."/>
            <person name="Amos-Landgraf J."/>
            <person name="Schwartz D.C."/>
            <person name="Cheng Z."/>
            <person name="Lindblad-Toh K."/>
            <person name="Eichler E.E."/>
            <person name="Ponting C.P."/>
        </authorList>
    </citation>
    <scope>NUCLEOTIDE SEQUENCE [LARGE SCALE GENOMIC DNA]</scope>
    <source>
        <strain>C57BL/6J</strain>
    </source>
</reference>
<reference key="5">
    <citation type="journal article" date="2010" name="Cell">
        <title>A tissue-specific atlas of mouse protein phosphorylation and expression.</title>
        <authorList>
            <person name="Huttlin E.L."/>
            <person name="Jedrychowski M.P."/>
            <person name="Elias J.E."/>
            <person name="Goswami T."/>
            <person name="Rad R."/>
            <person name="Beausoleil S.A."/>
            <person name="Villen J."/>
            <person name="Haas W."/>
            <person name="Sowa M.E."/>
            <person name="Gygi S.P."/>
        </authorList>
    </citation>
    <scope>IDENTIFICATION BY MASS SPECTROMETRY [LARGE SCALE ANALYSIS]</scope>
    <source>
        <tissue>Heart</tissue>
        <tissue>Liver</tissue>
        <tissue>Lung</tissue>
        <tissue>Spleen</tissue>
    </source>
</reference>